<accession>Q9D6J3</accession>
<reference key="1">
    <citation type="journal article" date="2005" name="Science">
        <title>The transcriptional landscape of the mammalian genome.</title>
        <authorList>
            <person name="Carninci P."/>
            <person name="Kasukawa T."/>
            <person name="Katayama S."/>
            <person name="Gough J."/>
            <person name="Frith M.C."/>
            <person name="Maeda N."/>
            <person name="Oyama R."/>
            <person name="Ravasi T."/>
            <person name="Lenhard B."/>
            <person name="Wells C."/>
            <person name="Kodzius R."/>
            <person name="Shimokawa K."/>
            <person name="Bajic V.B."/>
            <person name="Brenner S.E."/>
            <person name="Batalov S."/>
            <person name="Forrest A.R."/>
            <person name="Zavolan M."/>
            <person name="Davis M.J."/>
            <person name="Wilming L.G."/>
            <person name="Aidinis V."/>
            <person name="Allen J.E."/>
            <person name="Ambesi-Impiombato A."/>
            <person name="Apweiler R."/>
            <person name="Aturaliya R.N."/>
            <person name="Bailey T.L."/>
            <person name="Bansal M."/>
            <person name="Baxter L."/>
            <person name="Beisel K.W."/>
            <person name="Bersano T."/>
            <person name="Bono H."/>
            <person name="Chalk A.M."/>
            <person name="Chiu K.P."/>
            <person name="Choudhary V."/>
            <person name="Christoffels A."/>
            <person name="Clutterbuck D.R."/>
            <person name="Crowe M.L."/>
            <person name="Dalla E."/>
            <person name="Dalrymple B.P."/>
            <person name="de Bono B."/>
            <person name="Della Gatta G."/>
            <person name="di Bernardo D."/>
            <person name="Down T."/>
            <person name="Engstrom P."/>
            <person name="Fagiolini M."/>
            <person name="Faulkner G."/>
            <person name="Fletcher C.F."/>
            <person name="Fukushima T."/>
            <person name="Furuno M."/>
            <person name="Futaki S."/>
            <person name="Gariboldi M."/>
            <person name="Georgii-Hemming P."/>
            <person name="Gingeras T.R."/>
            <person name="Gojobori T."/>
            <person name="Green R.E."/>
            <person name="Gustincich S."/>
            <person name="Harbers M."/>
            <person name="Hayashi Y."/>
            <person name="Hensch T.K."/>
            <person name="Hirokawa N."/>
            <person name="Hill D."/>
            <person name="Huminiecki L."/>
            <person name="Iacono M."/>
            <person name="Ikeo K."/>
            <person name="Iwama A."/>
            <person name="Ishikawa T."/>
            <person name="Jakt M."/>
            <person name="Kanapin A."/>
            <person name="Katoh M."/>
            <person name="Kawasawa Y."/>
            <person name="Kelso J."/>
            <person name="Kitamura H."/>
            <person name="Kitano H."/>
            <person name="Kollias G."/>
            <person name="Krishnan S.P."/>
            <person name="Kruger A."/>
            <person name="Kummerfeld S.K."/>
            <person name="Kurochkin I.V."/>
            <person name="Lareau L.F."/>
            <person name="Lazarevic D."/>
            <person name="Lipovich L."/>
            <person name="Liu J."/>
            <person name="Liuni S."/>
            <person name="McWilliam S."/>
            <person name="Madan Babu M."/>
            <person name="Madera M."/>
            <person name="Marchionni L."/>
            <person name="Matsuda H."/>
            <person name="Matsuzawa S."/>
            <person name="Miki H."/>
            <person name="Mignone F."/>
            <person name="Miyake S."/>
            <person name="Morris K."/>
            <person name="Mottagui-Tabar S."/>
            <person name="Mulder N."/>
            <person name="Nakano N."/>
            <person name="Nakauchi H."/>
            <person name="Ng P."/>
            <person name="Nilsson R."/>
            <person name="Nishiguchi S."/>
            <person name="Nishikawa S."/>
            <person name="Nori F."/>
            <person name="Ohara O."/>
            <person name="Okazaki Y."/>
            <person name="Orlando V."/>
            <person name="Pang K.C."/>
            <person name="Pavan W.J."/>
            <person name="Pavesi G."/>
            <person name="Pesole G."/>
            <person name="Petrovsky N."/>
            <person name="Piazza S."/>
            <person name="Reed J."/>
            <person name="Reid J.F."/>
            <person name="Ring B.Z."/>
            <person name="Ringwald M."/>
            <person name="Rost B."/>
            <person name="Ruan Y."/>
            <person name="Salzberg S.L."/>
            <person name="Sandelin A."/>
            <person name="Schneider C."/>
            <person name="Schoenbach C."/>
            <person name="Sekiguchi K."/>
            <person name="Semple C.A."/>
            <person name="Seno S."/>
            <person name="Sessa L."/>
            <person name="Sheng Y."/>
            <person name="Shibata Y."/>
            <person name="Shimada H."/>
            <person name="Shimada K."/>
            <person name="Silva D."/>
            <person name="Sinclair B."/>
            <person name="Sperling S."/>
            <person name="Stupka E."/>
            <person name="Sugiura K."/>
            <person name="Sultana R."/>
            <person name="Takenaka Y."/>
            <person name="Taki K."/>
            <person name="Tammoja K."/>
            <person name="Tan S.L."/>
            <person name="Tang S."/>
            <person name="Taylor M.S."/>
            <person name="Tegner J."/>
            <person name="Teichmann S.A."/>
            <person name="Ueda H.R."/>
            <person name="van Nimwegen E."/>
            <person name="Verardo R."/>
            <person name="Wei C.L."/>
            <person name="Yagi K."/>
            <person name="Yamanishi H."/>
            <person name="Zabarovsky E."/>
            <person name="Zhu S."/>
            <person name="Zimmer A."/>
            <person name="Hide W."/>
            <person name="Bult C."/>
            <person name="Grimmond S.M."/>
            <person name="Teasdale R.D."/>
            <person name="Liu E.T."/>
            <person name="Brusic V."/>
            <person name="Quackenbush J."/>
            <person name="Wahlestedt C."/>
            <person name="Mattick J.S."/>
            <person name="Hume D.A."/>
            <person name="Kai C."/>
            <person name="Sasaki D."/>
            <person name="Tomaru Y."/>
            <person name="Fukuda S."/>
            <person name="Kanamori-Katayama M."/>
            <person name="Suzuki M."/>
            <person name="Aoki J."/>
            <person name="Arakawa T."/>
            <person name="Iida J."/>
            <person name="Imamura K."/>
            <person name="Itoh M."/>
            <person name="Kato T."/>
            <person name="Kawaji H."/>
            <person name="Kawagashira N."/>
            <person name="Kawashima T."/>
            <person name="Kojima M."/>
            <person name="Kondo S."/>
            <person name="Konno H."/>
            <person name="Nakano K."/>
            <person name="Ninomiya N."/>
            <person name="Nishio T."/>
            <person name="Okada M."/>
            <person name="Plessy C."/>
            <person name="Shibata K."/>
            <person name="Shiraki T."/>
            <person name="Suzuki S."/>
            <person name="Tagami M."/>
            <person name="Waki K."/>
            <person name="Watahiki A."/>
            <person name="Okamura-Oho Y."/>
            <person name="Suzuki H."/>
            <person name="Kawai J."/>
            <person name="Hayashizaki Y."/>
        </authorList>
    </citation>
    <scope>NUCLEOTIDE SEQUENCE [LARGE SCALE MRNA]</scope>
    <source>
        <strain>C57BL/6J</strain>
        <tissue>Hippocampus</tissue>
    </source>
</reference>
<reference key="2">
    <citation type="journal article" date="2004" name="Genome Res.">
        <title>The status, quality, and expansion of the NIH full-length cDNA project: the Mammalian Gene Collection (MGC).</title>
        <authorList>
            <consortium name="The MGC Project Team"/>
        </authorList>
    </citation>
    <scope>NUCLEOTIDE SEQUENCE [LARGE SCALE MRNA]</scope>
    <source>
        <strain>FVB/N</strain>
        <tissue>Mammary tumor</tissue>
    </source>
</reference>
<reference key="3">
    <citation type="journal article" date="2007" name="Proc. Natl. Acad. Sci. U.S.A.">
        <title>Large-scale phosphorylation analysis of mouse liver.</title>
        <authorList>
            <person name="Villen J."/>
            <person name="Beausoleil S.A."/>
            <person name="Gerber S.A."/>
            <person name="Gygi S.P."/>
        </authorList>
    </citation>
    <scope>PHOSPHORYLATION [LARGE SCALE ANALYSIS] AT SER-211 AND SER-213</scope>
    <scope>IDENTIFICATION BY MASS SPECTROMETRY [LARGE SCALE ANALYSIS]</scope>
    <source>
        <tissue>Liver</tissue>
    </source>
</reference>
<reference key="4">
    <citation type="journal article" date="2009" name="Mol. Cell. Proteomics">
        <title>Large scale localization of protein phosphorylation by use of electron capture dissociation mass spectrometry.</title>
        <authorList>
            <person name="Sweet S.M."/>
            <person name="Bailey C.M."/>
            <person name="Cunningham D.L."/>
            <person name="Heath J.K."/>
            <person name="Cooper H.J."/>
        </authorList>
    </citation>
    <scope>PHOSPHORYLATION [LARGE SCALE ANALYSIS] AT SER-211 AND SER-213</scope>
    <scope>IDENTIFICATION BY MASS SPECTROMETRY [LARGE SCALE ANALYSIS]</scope>
    <source>
        <tissue>Embryonic fibroblast</tissue>
    </source>
</reference>
<reference key="5">
    <citation type="journal article" date="2010" name="Cell">
        <title>A tissue-specific atlas of mouse protein phosphorylation and expression.</title>
        <authorList>
            <person name="Huttlin E.L."/>
            <person name="Jedrychowski M.P."/>
            <person name="Elias J.E."/>
            <person name="Goswami T."/>
            <person name="Rad R."/>
            <person name="Beausoleil S.A."/>
            <person name="Villen J."/>
            <person name="Haas W."/>
            <person name="Sowa M.E."/>
            <person name="Gygi S.P."/>
        </authorList>
    </citation>
    <scope>PHOSPHORYLATION [LARGE SCALE ANALYSIS] AT SER-211; SER-213; SER-309; SER-312 AND SER-314</scope>
    <scope>IDENTIFICATION BY MASS SPECTROMETRY [LARGE SCALE ANALYSIS]</scope>
    <source>
        <tissue>Brown adipose tissue</tissue>
        <tissue>Kidney</tissue>
        <tissue>Liver</tissue>
        <tissue>Lung</tissue>
        <tissue>Pancreas</tissue>
        <tissue>Spleen</tissue>
        <tissue>Testis</tissue>
    </source>
</reference>
<keyword id="KW-0479">Metal-binding</keyword>
<keyword id="KW-0507">mRNA processing</keyword>
<keyword id="KW-0508">mRNA splicing</keyword>
<keyword id="KW-0539">Nucleus</keyword>
<keyword id="KW-0597">Phosphoprotein</keyword>
<keyword id="KW-1185">Reference proteome</keyword>
<keyword id="KW-0747">Spliceosome</keyword>
<keyword id="KW-0862">Zinc</keyword>
<proteinExistence type="evidence at protein level"/>
<comment type="function">
    <text evidence="2">Part of the spliceosome which catalyzes two sequential transesterification reactions, first the excision of the non-coding intron from pre-mRNA and then the ligation of the coding exons to form the mature mRNA. Plays a role in stabilizing the structure of the spliceosome catalytic core and docking of the branch helix into the active site, producing 5'-exon and lariat intron-3'-intermediates. May protect cells from TP53-dependent apoptosis upon dsDNA break damage through association with PRP19-CD5L complex.</text>
</comment>
<comment type="subunit">
    <text evidence="2">Component of the spliceosome. Present in the activated B complex, the catalytically activated B* complex which catalyzes the branching, the catalytic step 1 C complex catalyzing the exon ligation, and the postcatalytic P complex containing the ligated exons (mRNA) and the excised lariat intron.</text>
</comment>
<comment type="subcellular location">
    <subcellularLocation>
        <location evidence="1 2">Nucleus</location>
    </subcellularLocation>
</comment>
<comment type="similarity">
    <text evidence="2">Belongs to the CWC16 family. YJU2 subfamily.</text>
</comment>
<dbReference type="EMBL" id="AK013533">
    <property type="protein sequence ID" value="BAB28900.1"/>
    <property type="molecule type" value="mRNA"/>
</dbReference>
<dbReference type="EMBL" id="BC031400">
    <property type="protein sequence ID" value="AAH31400.1"/>
    <property type="molecule type" value="mRNA"/>
</dbReference>
<dbReference type="CCDS" id="CCDS37660.1"/>
<dbReference type="RefSeq" id="NP_082657.1">
    <property type="nucleotide sequence ID" value="NM_028381.3"/>
</dbReference>
<dbReference type="SMR" id="Q9D6J3"/>
<dbReference type="BioGRID" id="215624">
    <property type="interactions" value="1"/>
</dbReference>
<dbReference type="FunCoup" id="Q9D6J3">
    <property type="interactions" value="705"/>
</dbReference>
<dbReference type="STRING" id="10090.ENSMUSP00000084082"/>
<dbReference type="iPTMnet" id="Q9D6J3"/>
<dbReference type="PhosphoSitePlus" id="Q9D6J3"/>
<dbReference type="jPOST" id="Q9D6J3"/>
<dbReference type="PaxDb" id="10090-ENSMUSP00000084082"/>
<dbReference type="PeptideAtlas" id="Q9D6J3"/>
<dbReference type="ProteomicsDB" id="281420"/>
<dbReference type="Pumba" id="Q9D6J3"/>
<dbReference type="Antibodypedia" id="42411">
    <property type="antibodies" value="124 antibodies from 20 providers"/>
</dbReference>
<dbReference type="DNASU" id="72886"/>
<dbReference type="Ensembl" id="ENSMUST00000086869.6">
    <property type="protein sequence ID" value="ENSMUSP00000084082.5"/>
    <property type="gene ID" value="ENSMUSG00000003208.10"/>
</dbReference>
<dbReference type="GeneID" id="72886"/>
<dbReference type="KEGG" id="mmu:72886"/>
<dbReference type="UCSC" id="uc008dak.1">
    <property type="organism name" value="mouse"/>
</dbReference>
<dbReference type="AGR" id="MGI:1920136"/>
<dbReference type="CTD" id="55702"/>
<dbReference type="MGI" id="MGI:1920136">
    <property type="gene designation" value="Yju2"/>
</dbReference>
<dbReference type="VEuPathDB" id="HostDB:ENSMUSG00000003208"/>
<dbReference type="eggNOG" id="KOG2989">
    <property type="taxonomic scope" value="Eukaryota"/>
</dbReference>
<dbReference type="GeneTree" id="ENSGT00530000063615"/>
<dbReference type="HOGENOM" id="CLU_053603_0_1_1"/>
<dbReference type="InParanoid" id="Q9D6J3"/>
<dbReference type="OMA" id="ENCDYQN"/>
<dbReference type="OrthoDB" id="674963at2759"/>
<dbReference type="PhylomeDB" id="Q9D6J3"/>
<dbReference type="TreeFam" id="TF315070"/>
<dbReference type="Reactome" id="R-MMU-72163">
    <property type="pathway name" value="mRNA Splicing - Major Pathway"/>
</dbReference>
<dbReference type="BioGRID-ORCS" id="72886">
    <property type="hits" value="24 hits in 76 CRISPR screens"/>
</dbReference>
<dbReference type="ChiTaRS" id="Ccdc94">
    <property type="organism name" value="mouse"/>
</dbReference>
<dbReference type="PRO" id="PR:Q9D6J3"/>
<dbReference type="Proteomes" id="UP000000589">
    <property type="component" value="Chromosome 17"/>
</dbReference>
<dbReference type="RNAct" id="Q9D6J3">
    <property type="molecule type" value="protein"/>
</dbReference>
<dbReference type="Bgee" id="ENSMUSG00000003208">
    <property type="expression patterns" value="Expressed in lumbar dorsal root ganglion and 236 other cell types or tissues"/>
</dbReference>
<dbReference type="ExpressionAtlas" id="Q9D6J3">
    <property type="expression patterns" value="baseline and differential"/>
</dbReference>
<dbReference type="GO" id="GO:0071006">
    <property type="term" value="C:U2-type catalytic step 1 spliceosome"/>
    <property type="evidence" value="ECO:0000250"/>
    <property type="project" value="UniProtKB"/>
</dbReference>
<dbReference type="GO" id="GO:0046872">
    <property type="term" value="F:metal ion binding"/>
    <property type="evidence" value="ECO:0007669"/>
    <property type="project" value="UniProtKB-KW"/>
</dbReference>
<dbReference type="GO" id="GO:0000349">
    <property type="term" value="P:generation of catalytic spliceosome for first transesterification step"/>
    <property type="evidence" value="ECO:0007669"/>
    <property type="project" value="UniProtKB-UniRule"/>
</dbReference>
<dbReference type="GO" id="GO:0043518">
    <property type="term" value="P:negative regulation of DNA damage response, signal transduction by p53 class mediator"/>
    <property type="evidence" value="ECO:0000250"/>
    <property type="project" value="UniProtKB"/>
</dbReference>
<dbReference type="HAMAP" id="MF_03226">
    <property type="entry name" value="YJU2"/>
    <property type="match status" value="1"/>
</dbReference>
<dbReference type="InterPro" id="IPR007590">
    <property type="entry name" value="Saf4/Yju2"/>
</dbReference>
<dbReference type="InterPro" id="IPR043701">
    <property type="entry name" value="Yju2"/>
</dbReference>
<dbReference type="PANTHER" id="PTHR12111">
    <property type="entry name" value="SPLICING FACTOR YJU2"/>
    <property type="match status" value="1"/>
</dbReference>
<dbReference type="PANTHER" id="PTHR12111:SF1">
    <property type="entry name" value="SPLICING FACTOR YJU2"/>
    <property type="match status" value="1"/>
</dbReference>
<dbReference type="Pfam" id="PF04502">
    <property type="entry name" value="Saf4_Yju2"/>
    <property type="match status" value="1"/>
</dbReference>
<sequence length="314" mass="35988">MSERKVLNKYYPPDFDPSKIPKLKLPKDRQYVVRLMAPFNMRCKTCGEYIYKGKKFNARKETVQNEAYLGLPIFRFYIKCTRCLAEITFKTDPENTDYTMEHGATRNFQAEKLLEEEEKRVQKEREDEELNNPMKVLENRTKDSKLEMEVLENLQELKDLNQRQAHVDFEAMLRQHRMSQEQWQQQQEEEDERETAALLEEARHRRLLEDSESEDEAPPSRPRAAARPNPTAILNEVPQTKRKAEALCSKAQLAGLVVPKKVKTEANGASEQVGVPTAAGAPKSRKADNPTPQTPGTSSLSQLGAYGDSEDSDS</sequence>
<feature type="chain" id="PRO_0000234019" description="Splicing factor YJU2">
    <location>
        <begin position="1"/>
        <end position="314"/>
    </location>
</feature>
<feature type="region of interest" description="Disordered" evidence="3">
    <location>
        <begin position="178"/>
        <end position="238"/>
    </location>
</feature>
<feature type="region of interest" description="Disordered" evidence="3">
    <location>
        <begin position="253"/>
        <end position="314"/>
    </location>
</feature>
<feature type="compositionally biased region" description="Basic and acidic residues" evidence="3">
    <location>
        <begin position="200"/>
        <end position="209"/>
    </location>
</feature>
<feature type="compositionally biased region" description="Low complexity" evidence="3">
    <location>
        <begin position="222"/>
        <end position="232"/>
    </location>
</feature>
<feature type="compositionally biased region" description="Polar residues" evidence="3">
    <location>
        <begin position="290"/>
        <end position="302"/>
    </location>
</feature>
<feature type="binding site" evidence="2">
    <location>
        <position position="43"/>
    </location>
    <ligand>
        <name>Zn(2+)</name>
        <dbReference type="ChEBI" id="CHEBI:29105"/>
    </ligand>
</feature>
<feature type="binding site" evidence="2">
    <location>
        <position position="46"/>
    </location>
    <ligand>
        <name>Zn(2+)</name>
        <dbReference type="ChEBI" id="CHEBI:29105"/>
    </ligand>
</feature>
<feature type="binding site" evidence="2">
    <location>
        <position position="80"/>
    </location>
    <ligand>
        <name>Zn(2+)</name>
        <dbReference type="ChEBI" id="CHEBI:29105"/>
    </ligand>
</feature>
<feature type="binding site" evidence="2">
    <location>
        <position position="83"/>
    </location>
    <ligand>
        <name>Zn(2+)</name>
        <dbReference type="ChEBI" id="CHEBI:29105"/>
    </ligand>
</feature>
<feature type="modified residue" description="Phosphoserine" evidence="6 7 8">
    <location>
        <position position="211"/>
    </location>
</feature>
<feature type="modified residue" description="Phosphoserine" evidence="6 7 8">
    <location>
        <position position="213"/>
    </location>
</feature>
<feature type="modified residue" description="Phosphoserine" evidence="1">
    <location>
        <position position="220"/>
    </location>
</feature>
<feature type="modified residue" description="Phosphoserine" evidence="8">
    <location>
        <position position="309"/>
    </location>
</feature>
<feature type="modified residue" description="Phosphoserine" evidence="8">
    <location>
        <position position="312"/>
    </location>
</feature>
<feature type="modified residue" description="Phosphoserine" evidence="8">
    <location>
        <position position="314"/>
    </location>
</feature>
<evidence type="ECO:0000250" key="1">
    <source>
        <dbReference type="UniProtKB" id="Q9BW85"/>
    </source>
</evidence>
<evidence type="ECO:0000255" key="2">
    <source>
        <dbReference type="HAMAP-Rule" id="MF_03226"/>
    </source>
</evidence>
<evidence type="ECO:0000256" key="3">
    <source>
        <dbReference type="SAM" id="MobiDB-lite"/>
    </source>
</evidence>
<evidence type="ECO:0000305" key="4"/>
<evidence type="ECO:0000312" key="5">
    <source>
        <dbReference type="MGI" id="MGI:1920136"/>
    </source>
</evidence>
<evidence type="ECO:0007744" key="6">
    <source>
    </source>
</evidence>
<evidence type="ECO:0007744" key="7">
    <source>
    </source>
</evidence>
<evidence type="ECO:0007744" key="8">
    <source>
    </source>
</evidence>
<protein>
    <recommendedName>
        <fullName evidence="2">Splicing factor YJU2</fullName>
    </recommendedName>
    <alternativeName>
        <fullName evidence="4">Coiled-coil domain-containing protein 94</fullName>
    </alternativeName>
</protein>
<name>YJU2_MOUSE</name>
<organism>
    <name type="scientific">Mus musculus</name>
    <name type="common">Mouse</name>
    <dbReference type="NCBI Taxonomy" id="10090"/>
    <lineage>
        <taxon>Eukaryota</taxon>
        <taxon>Metazoa</taxon>
        <taxon>Chordata</taxon>
        <taxon>Craniata</taxon>
        <taxon>Vertebrata</taxon>
        <taxon>Euteleostomi</taxon>
        <taxon>Mammalia</taxon>
        <taxon>Eutheria</taxon>
        <taxon>Euarchontoglires</taxon>
        <taxon>Glires</taxon>
        <taxon>Rodentia</taxon>
        <taxon>Myomorpha</taxon>
        <taxon>Muroidea</taxon>
        <taxon>Muridae</taxon>
        <taxon>Murinae</taxon>
        <taxon>Mus</taxon>
        <taxon>Mus</taxon>
    </lineage>
</organism>
<gene>
    <name evidence="2 5" type="primary">Yju2</name>
    <name evidence="5" type="synonym">Ccdc94</name>
</gene>